<keyword id="KW-0249">Electron transport</keyword>
<keyword id="KW-0472">Membrane</keyword>
<keyword id="KW-0535">Nitrogen fixation</keyword>
<keyword id="KW-1185">Reference proteome</keyword>
<keyword id="KW-1278">Translocase</keyword>
<keyword id="KW-0812">Transmembrane</keyword>
<keyword id="KW-1133">Transmembrane helix</keyword>
<keyword id="KW-0813">Transport</keyword>
<comment type="function">
    <text evidence="1">Part of a membrane-bound complex that couples electron transfer with translocation of ions across the membrane.</text>
</comment>
<comment type="subunit">
    <text evidence="1">The complex is composed of six subunits: RnfA, RnfB, RnfC, RnfD, RnfE and RnfG.</text>
</comment>
<comment type="subcellular location">
    <subcellularLocation>
        <location evidence="1">Cellular chromatophore membrane</location>
        <topology evidence="1">Multi-pass membrane protein</topology>
    </subcellularLocation>
</comment>
<comment type="similarity">
    <text evidence="1">Belongs to the NqrDE/RnfAE family.</text>
</comment>
<dbReference type="EC" id="7.-.-.-" evidence="1"/>
<dbReference type="EMBL" id="CP000144">
    <property type="protein sequence ID" value="ABA80808.1"/>
    <property type="molecule type" value="Genomic_DNA"/>
</dbReference>
<dbReference type="RefSeq" id="YP_354709.1">
    <property type="nucleotide sequence ID" value="NC_007494.2"/>
</dbReference>
<dbReference type="SMR" id="Q3IXC6"/>
<dbReference type="STRING" id="272943.RSP_3192"/>
<dbReference type="EnsemblBacteria" id="ABA80808">
    <property type="protein sequence ID" value="ABA80808"/>
    <property type="gene ID" value="RSP_3192"/>
</dbReference>
<dbReference type="KEGG" id="rsp:RSP_3192"/>
<dbReference type="PATRIC" id="fig|272943.9.peg.3622"/>
<dbReference type="eggNOG" id="COG4657">
    <property type="taxonomic scope" value="Bacteria"/>
</dbReference>
<dbReference type="OrthoDB" id="9803631at2"/>
<dbReference type="PhylomeDB" id="Q3IXC6"/>
<dbReference type="Proteomes" id="UP000002703">
    <property type="component" value="Chromosome 2"/>
</dbReference>
<dbReference type="GO" id="GO:0005886">
    <property type="term" value="C:plasma membrane"/>
    <property type="evidence" value="ECO:0007669"/>
    <property type="project" value="TreeGrafter"/>
</dbReference>
<dbReference type="GO" id="GO:0042717">
    <property type="term" value="C:plasma membrane-derived chromatophore membrane"/>
    <property type="evidence" value="ECO:0007669"/>
    <property type="project" value="UniProtKB-SubCell"/>
</dbReference>
<dbReference type="GO" id="GO:0022900">
    <property type="term" value="P:electron transport chain"/>
    <property type="evidence" value="ECO:0007669"/>
    <property type="project" value="UniProtKB-UniRule"/>
</dbReference>
<dbReference type="GO" id="GO:0009399">
    <property type="term" value="P:nitrogen fixation"/>
    <property type="evidence" value="ECO:0007669"/>
    <property type="project" value="UniProtKB-UniRule"/>
</dbReference>
<dbReference type="HAMAP" id="MF_00459">
    <property type="entry name" value="RsxA_RnfA"/>
    <property type="match status" value="1"/>
</dbReference>
<dbReference type="InterPro" id="IPR011293">
    <property type="entry name" value="Ion_transpt_RnfA/RsxA"/>
</dbReference>
<dbReference type="InterPro" id="IPR003667">
    <property type="entry name" value="NqrDE/RnfAE"/>
</dbReference>
<dbReference type="InterPro" id="IPR050133">
    <property type="entry name" value="NqrDE/RnfAE_oxidrdctase"/>
</dbReference>
<dbReference type="NCBIfam" id="NF003481">
    <property type="entry name" value="PRK05151.1"/>
    <property type="match status" value="1"/>
</dbReference>
<dbReference type="NCBIfam" id="TIGR01943">
    <property type="entry name" value="rnfA"/>
    <property type="match status" value="1"/>
</dbReference>
<dbReference type="PANTHER" id="PTHR30335">
    <property type="entry name" value="INTEGRAL MEMBRANE PROTEIN OF SOXR-REDUCING COMPLEX"/>
    <property type="match status" value="1"/>
</dbReference>
<dbReference type="PANTHER" id="PTHR30335:SF0">
    <property type="entry name" value="ION-TRANSLOCATING OXIDOREDUCTASE COMPLEX SUBUNIT A"/>
    <property type="match status" value="1"/>
</dbReference>
<dbReference type="Pfam" id="PF02508">
    <property type="entry name" value="Rnf-Nqr"/>
    <property type="match status" value="1"/>
</dbReference>
<dbReference type="PIRSF" id="PIRSF006102">
    <property type="entry name" value="NQR_DE"/>
    <property type="match status" value="1"/>
</dbReference>
<reference key="1">
    <citation type="submission" date="2005-09" db="EMBL/GenBank/DDBJ databases">
        <title>Complete sequence of chromosome 2 of Rhodobacter sphaeroides 2.4.1.</title>
        <authorList>
            <person name="Copeland A."/>
            <person name="Lucas S."/>
            <person name="Lapidus A."/>
            <person name="Barry K."/>
            <person name="Detter J.C."/>
            <person name="Glavina T."/>
            <person name="Hammon N."/>
            <person name="Israni S."/>
            <person name="Pitluck S."/>
            <person name="Richardson P."/>
            <person name="Mackenzie C."/>
            <person name="Choudhary M."/>
            <person name="Larimer F."/>
            <person name="Hauser L.J."/>
            <person name="Land M."/>
            <person name="Donohue T.J."/>
            <person name="Kaplan S."/>
        </authorList>
    </citation>
    <scope>NUCLEOTIDE SEQUENCE [LARGE SCALE GENOMIC DNA]</scope>
    <source>
        <strain>ATCC 17023 / DSM 158 / JCM 6121 / CCUG 31486 / LMG 2827 / NBRC 12203 / NCIMB 8253 / ATH 2.4.1.</strain>
    </source>
</reference>
<gene>
    <name evidence="1" type="primary">rnfA</name>
    <name type="ordered locus">RHOS4_32400</name>
    <name type="ORF">RSP_3192</name>
</gene>
<sequence length="193" mass="20229">MGDFFFILLSTALVNNVVLVKFLGLCPFMGVSRKTDAAIGMGLATTFVLTLAAGASWMVEALILEPLDLTFLRILSLILVIAAIVQFIEVVMRKLAPGLHRALGIYLPLITTNCAVLGVALLNIQEGHGLASSLLYGFGSASGFTLVLVIFAGMRERLAQLSVPGPFAGAPIAFISAGLLSMAFMGFAGLAPN</sequence>
<proteinExistence type="inferred from homology"/>
<organism>
    <name type="scientific">Cereibacter sphaeroides (strain ATCC 17023 / DSM 158 / JCM 6121 / CCUG 31486 / LMG 2827 / NBRC 12203 / NCIMB 8253 / ATH 2.4.1.)</name>
    <name type="common">Rhodobacter sphaeroides</name>
    <dbReference type="NCBI Taxonomy" id="272943"/>
    <lineage>
        <taxon>Bacteria</taxon>
        <taxon>Pseudomonadati</taxon>
        <taxon>Pseudomonadota</taxon>
        <taxon>Alphaproteobacteria</taxon>
        <taxon>Rhodobacterales</taxon>
        <taxon>Paracoccaceae</taxon>
        <taxon>Cereibacter</taxon>
    </lineage>
</organism>
<accession>Q3IXC6</accession>
<protein>
    <recommendedName>
        <fullName evidence="1">Ion-translocating oxidoreductase complex subunit A</fullName>
        <ecNumber evidence="1">7.-.-.-</ecNumber>
    </recommendedName>
    <alternativeName>
        <fullName evidence="1">Rnf electron transport complex subunit A</fullName>
    </alternativeName>
</protein>
<feature type="chain" id="PRO_1000013543" description="Ion-translocating oxidoreductase complex subunit A">
    <location>
        <begin position="1"/>
        <end position="193"/>
    </location>
</feature>
<feature type="transmembrane region" description="Helical" evidence="1">
    <location>
        <begin position="4"/>
        <end position="24"/>
    </location>
</feature>
<feature type="transmembrane region" description="Helical" evidence="1">
    <location>
        <begin position="39"/>
        <end position="59"/>
    </location>
</feature>
<feature type="transmembrane region" description="Helical" evidence="1">
    <location>
        <begin position="71"/>
        <end position="91"/>
    </location>
</feature>
<feature type="transmembrane region" description="Helical" evidence="1">
    <location>
        <begin position="102"/>
        <end position="122"/>
    </location>
</feature>
<feature type="transmembrane region" description="Helical" evidence="1">
    <location>
        <begin position="134"/>
        <end position="154"/>
    </location>
</feature>
<feature type="transmembrane region" description="Helical" evidence="1">
    <location>
        <begin position="167"/>
        <end position="187"/>
    </location>
</feature>
<name>RNFA_CERS4</name>
<evidence type="ECO:0000255" key="1">
    <source>
        <dbReference type="HAMAP-Rule" id="MF_00459"/>
    </source>
</evidence>